<dbReference type="EC" id="2.1.1.190" evidence="1"/>
<dbReference type="EMBL" id="AM406670">
    <property type="protein sequence ID" value="CAL93717.1"/>
    <property type="molecule type" value="Genomic_DNA"/>
</dbReference>
<dbReference type="RefSeq" id="WP_011764834.1">
    <property type="nucleotide sequence ID" value="NC_008702.1"/>
</dbReference>
<dbReference type="SMR" id="A1K4G2"/>
<dbReference type="STRING" id="62928.azo1100"/>
<dbReference type="KEGG" id="azo:azo1100"/>
<dbReference type="eggNOG" id="COG2265">
    <property type="taxonomic scope" value="Bacteria"/>
</dbReference>
<dbReference type="HOGENOM" id="CLU_014689_8_2_4"/>
<dbReference type="Proteomes" id="UP000002588">
    <property type="component" value="Chromosome"/>
</dbReference>
<dbReference type="GO" id="GO:0051539">
    <property type="term" value="F:4 iron, 4 sulfur cluster binding"/>
    <property type="evidence" value="ECO:0007669"/>
    <property type="project" value="UniProtKB-KW"/>
</dbReference>
<dbReference type="GO" id="GO:0005506">
    <property type="term" value="F:iron ion binding"/>
    <property type="evidence" value="ECO:0007669"/>
    <property type="project" value="UniProtKB-UniRule"/>
</dbReference>
<dbReference type="GO" id="GO:0003723">
    <property type="term" value="F:RNA binding"/>
    <property type="evidence" value="ECO:0007669"/>
    <property type="project" value="InterPro"/>
</dbReference>
<dbReference type="GO" id="GO:0070041">
    <property type="term" value="F:rRNA (uridine-C5-)-methyltransferase activity"/>
    <property type="evidence" value="ECO:0007669"/>
    <property type="project" value="UniProtKB-UniRule"/>
</dbReference>
<dbReference type="GO" id="GO:0070475">
    <property type="term" value="P:rRNA base methylation"/>
    <property type="evidence" value="ECO:0007669"/>
    <property type="project" value="TreeGrafter"/>
</dbReference>
<dbReference type="CDD" id="cd02440">
    <property type="entry name" value="AdoMet_MTases"/>
    <property type="match status" value="1"/>
</dbReference>
<dbReference type="FunFam" id="2.40.50.140:FF:000097">
    <property type="entry name" value="23S rRNA (uracil(1939)-C(5))-methyltransferase RlmD"/>
    <property type="match status" value="1"/>
</dbReference>
<dbReference type="Gene3D" id="2.40.50.1070">
    <property type="match status" value="1"/>
</dbReference>
<dbReference type="Gene3D" id="2.40.50.140">
    <property type="entry name" value="Nucleic acid-binding proteins"/>
    <property type="match status" value="1"/>
</dbReference>
<dbReference type="Gene3D" id="3.40.50.150">
    <property type="entry name" value="Vaccinia Virus protein VP39"/>
    <property type="match status" value="1"/>
</dbReference>
<dbReference type="HAMAP" id="MF_01010">
    <property type="entry name" value="23SrRNA_methyltr_RlmD"/>
    <property type="match status" value="1"/>
</dbReference>
<dbReference type="InterPro" id="IPR001566">
    <property type="entry name" value="23S_rRNA_MeTrfase_RlmD"/>
</dbReference>
<dbReference type="InterPro" id="IPR030390">
    <property type="entry name" value="MeTrfase_TrmA_AS"/>
</dbReference>
<dbReference type="InterPro" id="IPR012340">
    <property type="entry name" value="NA-bd_OB-fold"/>
</dbReference>
<dbReference type="InterPro" id="IPR029063">
    <property type="entry name" value="SAM-dependent_MTases_sf"/>
</dbReference>
<dbReference type="InterPro" id="IPR002792">
    <property type="entry name" value="TRAM_dom"/>
</dbReference>
<dbReference type="InterPro" id="IPR010280">
    <property type="entry name" value="U5_MeTrfase_fam"/>
</dbReference>
<dbReference type="NCBIfam" id="NF009639">
    <property type="entry name" value="PRK13168.1"/>
    <property type="match status" value="1"/>
</dbReference>
<dbReference type="NCBIfam" id="TIGR00479">
    <property type="entry name" value="rumA"/>
    <property type="match status" value="1"/>
</dbReference>
<dbReference type="PANTHER" id="PTHR11061:SF49">
    <property type="entry name" value="23S RRNA (URACIL(1939)-C(5))-METHYLTRANSFERASE RLMD"/>
    <property type="match status" value="1"/>
</dbReference>
<dbReference type="PANTHER" id="PTHR11061">
    <property type="entry name" value="RNA M5U METHYLTRANSFERASE"/>
    <property type="match status" value="1"/>
</dbReference>
<dbReference type="Pfam" id="PF01938">
    <property type="entry name" value="TRAM"/>
    <property type="match status" value="1"/>
</dbReference>
<dbReference type="Pfam" id="PF05958">
    <property type="entry name" value="tRNA_U5-meth_tr"/>
    <property type="match status" value="1"/>
</dbReference>
<dbReference type="SUPFAM" id="SSF50249">
    <property type="entry name" value="Nucleic acid-binding proteins"/>
    <property type="match status" value="1"/>
</dbReference>
<dbReference type="SUPFAM" id="SSF53335">
    <property type="entry name" value="S-adenosyl-L-methionine-dependent methyltransferases"/>
    <property type="match status" value="1"/>
</dbReference>
<dbReference type="PROSITE" id="PS51687">
    <property type="entry name" value="SAM_MT_RNA_M5U"/>
    <property type="match status" value="1"/>
</dbReference>
<dbReference type="PROSITE" id="PS50926">
    <property type="entry name" value="TRAM"/>
    <property type="match status" value="1"/>
</dbReference>
<dbReference type="PROSITE" id="PS01230">
    <property type="entry name" value="TRMA_1"/>
    <property type="match status" value="1"/>
</dbReference>
<protein>
    <recommendedName>
        <fullName evidence="1">23S rRNA (uracil(1939)-C(5))-methyltransferase RlmD</fullName>
        <ecNumber evidence="1">2.1.1.190</ecNumber>
    </recommendedName>
    <alternativeName>
        <fullName evidence="1">23S rRNA(m5U1939)-methyltransferase</fullName>
    </alternativeName>
</protein>
<reference key="1">
    <citation type="journal article" date="2006" name="Nat. Biotechnol.">
        <title>Complete genome of the mutualistic, N2-fixing grass endophyte Azoarcus sp. strain BH72.</title>
        <authorList>
            <person name="Krause A."/>
            <person name="Ramakumar A."/>
            <person name="Bartels D."/>
            <person name="Battistoni F."/>
            <person name="Bekel T."/>
            <person name="Boch J."/>
            <person name="Boehm M."/>
            <person name="Friedrich F."/>
            <person name="Hurek T."/>
            <person name="Krause L."/>
            <person name="Linke B."/>
            <person name="McHardy A.C."/>
            <person name="Sarkar A."/>
            <person name="Schneiker S."/>
            <person name="Syed A.A."/>
            <person name="Thauer R."/>
            <person name="Vorhoelter F.-J."/>
            <person name="Weidner S."/>
            <person name="Puehler A."/>
            <person name="Reinhold-Hurek B."/>
            <person name="Kaiser O."/>
            <person name="Goesmann A."/>
        </authorList>
    </citation>
    <scope>NUCLEOTIDE SEQUENCE [LARGE SCALE GENOMIC DNA]</scope>
    <source>
        <strain>BH72</strain>
    </source>
</reference>
<keyword id="KW-0004">4Fe-4S</keyword>
<keyword id="KW-0408">Iron</keyword>
<keyword id="KW-0411">Iron-sulfur</keyword>
<keyword id="KW-0479">Metal-binding</keyword>
<keyword id="KW-0489">Methyltransferase</keyword>
<keyword id="KW-1185">Reference proteome</keyword>
<keyword id="KW-0698">rRNA processing</keyword>
<keyword id="KW-0949">S-adenosyl-L-methionine</keyword>
<keyword id="KW-0808">Transferase</keyword>
<sequence length="433" mass="46820">MPTAVIESLDHEGRGIARVEGKAVFIEGGLPGETVEYRVLRSKPNYEQAEATRIVRRSALRVAPRCPHFGVCGGCSMQHLDTLAQAATKQRVLEDALWRIGKVKPGIIYSAIQGPAWGYRYRARLGVRLVPAKGGVLIGFHERRSSYIADLGVCPVLPAHVSALLPALKVLVASLSIADRLPQIEVAVSEATTVLVFRNLLALKKADEAQLRSFAETHGVQVWLQPEGPDSIVPLHPRSGPGLTYTLPEFDVALDFRATDFTQVNVHINRLLIRRAMQLLQPAPGERIADLFCGLGNFSLPIARRGATVVGVEGSEALVARALENARRNGLDSRTEFHAANLFDATEDSLAALGPLDKLLIDPPREGAIAVVKAVGPAQQPARIVYVSCNPATLARDAAVLVHEKGYVLRGAGIANMFPQTSHVESIALFERP</sequence>
<feature type="chain" id="PRO_0000282029" description="23S rRNA (uracil(1939)-C(5))-methyltransferase RlmD">
    <location>
        <begin position="1"/>
        <end position="433"/>
    </location>
</feature>
<feature type="domain" description="TRAM" evidence="1">
    <location>
        <begin position="1"/>
        <end position="53"/>
    </location>
</feature>
<feature type="active site" description="Nucleophile" evidence="1">
    <location>
        <position position="389"/>
    </location>
</feature>
<feature type="binding site" evidence="1">
    <location>
        <position position="66"/>
    </location>
    <ligand>
        <name>[4Fe-4S] cluster</name>
        <dbReference type="ChEBI" id="CHEBI:49883"/>
    </ligand>
</feature>
<feature type="binding site" evidence="1">
    <location>
        <position position="72"/>
    </location>
    <ligand>
        <name>[4Fe-4S] cluster</name>
        <dbReference type="ChEBI" id="CHEBI:49883"/>
    </ligand>
</feature>
<feature type="binding site" evidence="1">
    <location>
        <position position="75"/>
    </location>
    <ligand>
        <name>[4Fe-4S] cluster</name>
        <dbReference type="ChEBI" id="CHEBI:49883"/>
    </ligand>
</feature>
<feature type="binding site" evidence="1">
    <location>
        <position position="154"/>
    </location>
    <ligand>
        <name>[4Fe-4S] cluster</name>
        <dbReference type="ChEBI" id="CHEBI:49883"/>
    </ligand>
</feature>
<feature type="binding site" evidence="1">
    <location>
        <position position="263"/>
    </location>
    <ligand>
        <name>S-adenosyl-L-methionine</name>
        <dbReference type="ChEBI" id="CHEBI:59789"/>
    </ligand>
</feature>
<feature type="binding site" evidence="1">
    <location>
        <position position="292"/>
    </location>
    <ligand>
        <name>S-adenosyl-L-methionine</name>
        <dbReference type="ChEBI" id="CHEBI:59789"/>
    </ligand>
</feature>
<feature type="binding site" evidence="1">
    <location>
        <position position="297"/>
    </location>
    <ligand>
        <name>S-adenosyl-L-methionine</name>
        <dbReference type="ChEBI" id="CHEBI:59789"/>
    </ligand>
</feature>
<feature type="binding site" evidence="1">
    <location>
        <position position="313"/>
    </location>
    <ligand>
        <name>S-adenosyl-L-methionine</name>
        <dbReference type="ChEBI" id="CHEBI:59789"/>
    </ligand>
</feature>
<feature type="binding site" evidence="1">
    <location>
        <position position="341"/>
    </location>
    <ligand>
        <name>S-adenosyl-L-methionine</name>
        <dbReference type="ChEBI" id="CHEBI:59789"/>
    </ligand>
</feature>
<feature type="binding site" evidence="1">
    <location>
        <position position="362"/>
    </location>
    <ligand>
        <name>S-adenosyl-L-methionine</name>
        <dbReference type="ChEBI" id="CHEBI:59789"/>
    </ligand>
</feature>
<name>RLMD_AZOSB</name>
<gene>
    <name evidence="1" type="primary">rlmD</name>
    <name type="synonym">rumA</name>
    <name type="ordered locus">azo1100</name>
</gene>
<organism>
    <name type="scientific">Azoarcus sp. (strain BH72)</name>
    <dbReference type="NCBI Taxonomy" id="418699"/>
    <lineage>
        <taxon>Bacteria</taxon>
        <taxon>Pseudomonadati</taxon>
        <taxon>Pseudomonadota</taxon>
        <taxon>Betaproteobacteria</taxon>
        <taxon>Rhodocyclales</taxon>
        <taxon>Zoogloeaceae</taxon>
        <taxon>Azoarcus</taxon>
    </lineage>
</organism>
<proteinExistence type="inferred from homology"/>
<comment type="function">
    <text evidence="1">Catalyzes the formation of 5-methyl-uridine at position 1939 (m5U1939) in 23S rRNA.</text>
</comment>
<comment type="catalytic activity">
    <reaction evidence="1">
        <text>uridine(1939) in 23S rRNA + S-adenosyl-L-methionine = 5-methyluridine(1939) in 23S rRNA + S-adenosyl-L-homocysteine + H(+)</text>
        <dbReference type="Rhea" id="RHEA:42908"/>
        <dbReference type="Rhea" id="RHEA-COMP:10278"/>
        <dbReference type="Rhea" id="RHEA-COMP:10279"/>
        <dbReference type="ChEBI" id="CHEBI:15378"/>
        <dbReference type="ChEBI" id="CHEBI:57856"/>
        <dbReference type="ChEBI" id="CHEBI:59789"/>
        <dbReference type="ChEBI" id="CHEBI:65315"/>
        <dbReference type="ChEBI" id="CHEBI:74447"/>
        <dbReference type="EC" id="2.1.1.190"/>
    </reaction>
</comment>
<comment type="similarity">
    <text evidence="1">Belongs to the class I-like SAM-binding methyltransferase superfamily. RNA M5U methyltransferase family. RlmD subfamily.</text>
</comment>
<evidence type="ECO:0000255" key="1">
    <source>
        <dbReference type="HAMAP-Rule" id="MF_01010"/>
    </source>
</evidence>
<accession>A1K4G2</accession>